<feature type="chain" id="PRO_1000054719" description="Large ribosomal subunit protein uL16">
    <location>
        <begin position="1"/>
        <end position="137"/>
    </location>
</feature>
<dbReference type="EMBL" id="CP000419">
    <property type="protein sequence ID" value="ABJ67014.1"/>
    <property type="molecule type" value="Genomic_DNA"/>
</dbReference>
<dbReference type="RefSeq" id="WP_002952157.1">
    <property type="nucleotide sequence ID" value="NC_008532.1"/>
</dbReference>
<dbReference type="SMR" id="Q03IF8"/>
<dbReference type="KEGG" id="ste:STER_1900"/>
<dbReference type="HOGENOM" id="CLU_078858_2_1_9"/>
<dbReference type="GO" id="GO:0022625">
    <property type="term" value="C:cytosolic large ribosomal subunit"/>
    <property type="evidence" value="ECO:0007669"/>
    <property type="project" value="TreeGrafter"/>
</dbReference>
<dbReference type="GO" id="GO:0019843">
    <property type="term" value="F:rRNA binding"/>
    <property type="evidence" value="ECO:0007669"/>
    <property type="project" value="UniProtKB-UniRule"/>
</dbReference>
<dbReference type="GO" id="GO:0003735">
    <property type="term" value="F:structural constituent of ribosome"/>
    <property type="evidence" value="ECO:0007669"/>
    <property type="project" value="InterPro"/>
</dbReference>
<dbReference type="GO" id="GO:0000049">
    <property type="term" value="F:tRNA binding"/>
    <property type="evidence" value="ECO:0007669"/>
    <property type="project" value="UniProtKB-KW"/>
</dbReference>
<dbReference type="GO" id="GO:0006412">
    <property type="term" value="P:translation"/>
    <property type="evidence" value="ECO:0007669"/>
    <property type="project" value="UniProtKB-UniRule"/>
</dbReference>
<dbReference type="CDD" id="cd01433">
    <property type="entry name" value="Ribosomal_L16_L10e"/>
    <property type="match status" value="1"/>
</dbReference>
<dbReference type="FunFam" id="3.90.1170.10:FF:000001">
    <property type="entry name" value="50S ribosomal protein L16"/>
    <property type="match status" value="1"/>
</dbReference>
<dbReference type="Gene3D" id="3.90.1170.10">
    <property type="entry name" value="Ribosomal protein L10e/L16"/>
    <property type="match status" value="1"/>
</dbReference>
<dbReference type="HAMAP" id="MF_01342">
    <property type="entry name" value="Ribosomal_uL16"/>
    <property type="match status" value="1"/>
</dbReference>
<dbReference type="InterPro" id="IPR047873">
    <property type="entry name" value="Ribosomal_uL16"/>
</dbReference>
<dbReference type="InterPro" id="IPR000114">
    <property type="entry name" value="Ribosomal_uL16_bact-type"/>
</dbReference>
<dbReference type="InterPro" id="IPR020798">
    <property type="entry name" value="Ribosomal_uL16_CS"/>
</dbReference>
<dbReference type="InterPro" id="IPR016180">
    <property type="entry name" value="Ribosomal_uL16_dom"/>
</dbReference>
<dbReference type="InterPro" id="IPR036920">
    <property type="entry name" value="Ribosomal_uL16_sf"/>
</dbReference>
<dbReference type="NCBIfam" id="TIGR01164">
    <property type="entry name" value="rplP_bact"/>
    <property type="match status" value="1"/>
</dbReference>
<dbReference type="PANTHER" id="PTHR12220">
    <property type="entry name" value="50S/60S RIBOSOMAL PROTEIN L16"/>
    <property type="match status" value="1"/>
</dbReference>
<dbReference type="PANTHER" id="PTHR12220:SF13">
    <property type="entry name" value="LARGE RIBOSOMAL SUBUNIT PROTEIN UL16M"/>
    <property type="match status" value="1"/>
</dbReference>
<dbReference type="Pfam" id="PF00252">
    <property type="entry name" value="Ribosomal_L16"/>
    <property type="match status" value="1"/>
</dbReference>
<dbReference type="PRINTS" id="PR00060">
    <property type="entry name" value="RIBOSOMALL16"/>
</dbReference>
<dbReference type="SUPFAM" id="SSF54686">
    <property type="entry name" value="Ribosomal protein L16p/L10e"/>
    <property type="match status" value="1"/>
</dbReference>
<dbReference type="PROSITE" id="PS00586">
    <property type="entry name" value="RIBOSOMAL_L16_1"/>
    <property type="match status" value="1"/>
</dbReference>
<dbReference type="PROSITE" id="PS00701">
    <property type="entry name" value="RIBOSOMAL_L16_2"/>
    <property type="match status" value="1"/>
</dbReference>
<reference key="1">
    <citation type="journal article" date="2006" name="Proc. Natl. Acad. Sci. U.S.A.">
        <title>Comparative genomics of the lactic acid bacteria.</title>
        <authorList>
            <person name="Makarova K.S."/>
            <person name="Slesarev A."/>
            <person name="Wolf Y.I."/>
            <person name="Sorokin A."/>
            <person name="Mirkin B."/>
            <person name="Koonin E.V."/>
            <person name="Pavlov A."/>
            <person name="Pavlova N."/>
            <person name="Karamychev V."/>
            <person name="Polouchine N."/>
            <person name="Shakhova V."/>
            <person name="Grigoriev I."/>
            <person name="Lou Y."/>
            <person name="Rohksar D."/>
            <person name="Lucas S."/>
            <person name="Huang K."/>
            <person name="Goodstein D.M."/>
            <person name="Hawkins T."/>
            <person name="Plengvidhya V."/>
            <person name="Welker D."/>
            <person name="Hughes J."/>
            <person name="Goh Y."/>
            <person name="Benson A."/>
            <person name="Baldwin K."/>
            <person name="Lee J.-H."/>
            <person name="Diaz-Muniz I."/>
            <person name="Dosti B."/>
            <person name="Smeianov V."/>
            <person name="Wechter W."/>
            <person name="Barabote R."/>
            <person name="Lorca G."/>
            <person name="Altermann E."/>
            <person name="Barrangou R."/>
            <person name="Ganesan B."/>
            <person name="Xie Y."/>
            <person name="Rawsthorne H."/>
            <person name="Tamir D."/>
            <person name="Parker C."/>
            <person name="Breidt F."/>
            <person name="Broadbent J.R."/>
            <person name="Hutkins R."/>
            <person name="O'Sullivan D."/>
            <person name="Steele J."/>
            <person name="Unlu G."/>
            <person name="Saier M.H. Jr."/>
            <person name="Klaenhammer T."/>
            <person name="Richardson P."/>
            <person name="Kozyavkin S."/>
            <person name="Weimer B.C."/>
            <person name="Mills D.A."/>
        </authorList>
    </citation>
    <scope>NUCLEOTIDE SEQUENCE [LARGE SCALE GENOMIC DNA]</scope>
    <source>
        <strain>ATCC BAA-491 / LMD-9</strain>
    </source>
</reference>
<comment type="function">
    <text evidence="1">Binds 23S rRNA and is also seen to make contacts with the A and possibly P site tRNAs.</text>
</comment>
<comment type="subunit">
    <text evidence="1">Part of the 50S ribosomal subunit.</text>
</comment>
<comment type="similarity">
    <text evidence="1">Belongs to the universal ribosomal protein uL16 family.</text>
</comment>
<gene>
    <name evidence="1" type="primary">rplP</name>
    <name type="ordered locus">STER_1900</name>
</gene>
<accession>Q03IF8</accession>
<organism>
    <name type="scientific">Streptococcus thermophilus (strain ATCC BAA-491 / LMD-9)</name>
    <dbReference type="NCBI Taxonomy" id="322159"/>
    <lineage>
        <taxon>Bacteria</taxon>
        <taxon>Bacillati</taxon>
        <taxon>Bacillota</taxon>
        <taxon>Bacilli</taxon>
        <taxon>Lactobacillales</taxon>
        <taxon>Streptococcaceae</taxon>
        <taxon>Streptococcus</taxon>
    </lineage>
</organism>
<name>RL16_STRTD</name>
<keyword id="KW-0687">Ribonucleoprotein</keyword>
<keyword id="KW-0689">Ribosomal protein</keyword>
<keyword id="KW-0694">RNA-binding</keyword>
<keyword id="KW-0699">rRNA-binding</keyword>
<keyword id="KW-0820">tRNA-binding</keyword>
<evidence type="ECO:0000255" key="1">
    <source>
        <dbReference type="HAMAP-Rule" id="MF_01342"/>
    </source>
</evidence>
<evidence type="ECO:0000305" key="2"/>
<protein>
    <recommendedName>
        <fullName evidence="1">Large ribosomal subunit protein uL16</fullName>
    </recommendedName>
    <alternativeName>
        <fullName evidence="2">50S ribosomal protein L16</fullName>
    </alternativeName>
</protein>
<sequence length="137" mass="15422">MLVPKRVKHRREFRGKMRGEAKGGKEVSFGEYGLQATTSHWITNRQIEAARIAMTRYMKRGGKVWIKIFPHKSYTAKAIGVRMGSGKGAPEGWVAPVKRGKVMFEIAGVSEEVAREALRLASHKLPVKSKFVKREAE</sequence>
<proteinExistence type="inferred from homology"/>